<feature type="chain" id="PRO_0000180607" description="Glucose-6-phosphate isomerase">
    <location>
        <begin position="1"/>
        <end position="530"/>
    </location>
</feature>
<feature type="active site" description="Proton donor" evidence="1">
    <location>
        <position position="356"/>
    </location>
</feature>
<feature type="active site" evidence="1">
    <location>
        <position position="387"/>
    </location>
</feature>
<feature type="active site" evidence="1">
    <location>
        <position position="502"/>
    </location>
</feature>
<sequence length="530" mass="59951">MINYKNLNELENFKILEGIAPEVLKTALTGKRIKEYDITIEGDSVHYNYASKQINENHLKIFQNLSDEANLIEKYKEVLNGEKINISENRKVLHHLTRGQIGKDVIEDNKENMREFFQSELEKIYNFAKQVHSGNIKSVNGKKFKNVVQIGIGGSSLGPKALYSSIKNYAKKHNLALMNGYFISNIDPDESEEVLNSINLDETLFIIVSKSGNTLETTANMQFLINKLKSNGIKEYKKQMTIITLKNSMLALEETGCLEYFFMHDSIGGRFSPTSAVGLALLTLCFTEKIVKEIIKGANKTDKKSLNKKVKDNAPLLAALISIYERNVLNYSSNCIIAYSKAMENFYLHLQQLEMESNGKSVNRFNETINYKTVRIIWGGVGTDVQHSFFQMLHQGTDIVPMDFIGFNATQLKEDVISDNSSSNDKLKANLIAQIIAFSKGKENSNKNKNFKGERPSALIYSKELTPYAIGAILSHYENKVMFEGFLLNINSFDQEGVQLGKILANQILKNNAFEDEVIESYSKKILKQD</sequence>
<accession>Q660E3</accession>
<organism>
    <name type="scientific">Borrelia garinii subsp. bavariensis (strain ATCC BAA-2496 / DSM 23469 / PBi)</name>
    <name type="common">Borreliella bavariensis</name>
    <dbReference type="NCBI Taxonomy" id="290434"/>
    <lineage>
        <taxon>Bacteria</taxon>
        <taxon>Pseudomonadati</taxon>
        <taxon>Spirochaetota</taxon>
        <taxon>Spirochaetia</taxon>
        <taxon>Spirochaetales</taxon>
        <taxon>Borreliaceae</taxon>
        <taxon>Borreliella</taxon>
    </lineage>
</organism>
<protein>
    <recommendedName>
        <fullName evidence="1">Glucose-6-phosphate isomerase</fullName>
        <shortName evidence="1">GPI</shortName>
        <ecNumber evidence="1">5.3.1.9</ecNumber>
    </recommendedName>
    <alternativeName>
        <fullName evidence="1">Phosphoglucose isomerase</fullName>
        <shortName evidence="1">PGI</shortName>
    </alternativeName>
    <alternativeName>
        <fullName evidence="1">Phosphohexose isomerase</fullName>
        <shortName evidence="1">PHI</shortName>
    </alternativeName>
</protein>
<proteinExistence type="inferred from homology"/>
<evidence type="ECO:0000255" key="1">
    <source>
        <dbReference type="HAMAP-Rule" id="MF_00473"/>
    </source>
</evidence>
<reference key="1">
    <citation type="journal article" date="2004" name="Nucleic Acids Res.">
        <title>Comparative analysis of the Borrelia garinii genome.</title>
        <authorList>
            <person name="Gloeckner G."/>
            <person name="Lehmann R."/>
            <person name="Romualdi A."/>
            <person name="Pradella S."/>
            <person name="Schulte-Spechtel U."/>
            <person name="Schilhabel M."/>
            <person name="Wilske B."/>
            <person name="Suehnel J."/>
            <person name="Platzer M."/>
        </authorList>
    </citation>
    <scope>NUCLEOTIDE SEQUENCE [LARGE SCALE GENOMIC DNA]</scope>
    <source>
        <strain>ATCC BAA-2496 / DSM 23469 / PBi</strain>
    </source>
</reference>
<name>G6PI_BORGP</name>
<keyword id="KW-0963">Cytoplasm</keyword>
<keyword id="KW-0312">Gluconeogenesis</keyword>
<keyword id="KW-0324">Glycolysis</keyword>
<keyword id="KW-0413">Isomerase</keyword>
<comment type="function">
    <text evidence="1">Catalyzes the reversible isomerization of glucose-6-phosphate to fructose-6-phosphate.</text>
</comment>
<comment type="catalytic activity">
    <reaction evidence="1">
        <text>alpha-D-glucose 6-phosphate = beta-D-fructose 6-phosphate</text>
        <dbReference type="Rhea" id="RHEA:11816"/>
        <dbReference type="ChEBI" id="CHEBI:57634"/>
        <dbReference type="ChEBI" id="CHEBI:58225"/>
        <dbReference type="EC" id="5.3.1.9"/>
    </reaction>
</comment>
<comment type="pathway">
    <text evidence="1">Carbohydrate biosynthesis; gluconeogenesis.</text>
</comment>
<comment type="pathway">
    <text evidence="1">Carbohydrate degradation; glycolysis; D-glyceraldehyde 3-phosphate and glycerone phosphate from D-glucose: step 2/4.</text>
</comment>
<comment type="subcellular location">
    <subcellularLocation>
        <location evidence="1">Cytoplasm</location>
    </subcellularLocation>
</comment>
<comment type="similarity">
    <text evidence="1">Belongs to the GPI family.</text>
</comment>
<dbReference type="EC" id="5.3.1.9" evidence="1"/>
<dbReference type="EMBL" id="CP000013">
    <property type="protein sequence ID" value="AAU07578.1"/>
    <property type="molecule type" value="Genomic_DNA"/>
</dbReference>
<dbReference type="RefSeq" id="WP_011194026.1">
    <property type="nucleotide sequence ID" value="NZ_CP028872.1"/>
</dbReference>
<dbReference type="SMR" id="Q660E3"/>
<dbReference type="GeneID" id="45161528"/>
<dbReference type="KEGG" id="bga:BG0752"/>
<dbReference type="eggNOG" id="COG0166">
    <property type="taxonomic scope" value="Bacteria"/>
</dbReference>
<dbReference type="HOGENOM" id="CLU_017947_3_1_12"/>
<dbReference type="OrthoDB" id="140919at2"/>
<dbReference type="UniPathway" id="UPA00109">
    <property type="reaction ID" value="UER00181"/>
</dbReference>
<dbReference type="UniPathway" id="UPA00138"/>
<dbReference type="Proteomes" id="UP000002276">
    <property type="component" value="Chromosome"/>
</dbReference>
<dbReference type="GO" id="GO:0005829">
    <property type="term" value="C:cytosol"/>
    <property type="evidence" value="ECO:0007669"/>
    <property type="project" value="TreeGrafter"/>
</dbReference>
<dbReference type="GO" id="GO:0097367">
    <property type="term" value="F:carbohydrate derivative binding"/>
    <property type="evidence" value="ECO:0007669"/>
    <property type="project" value="InterPro"/>
</dbReference>
<dbReference type="GO" id="GO:0004347">
    <property type="term" value="F:glucose-6-phosphate isomerase activity"/>
    <property type="evidence" value="ECO:0007669"/>
    <property type="project" value="UniProtKB-UniRule"/>
</dbReference>
<dbReference type="GO" id="GO:0048029">
    <property type="term" value="F:monosaccharide binding"/>
    <property type="evidence" value="ECO:0007669"/>
    <property type="project" value="TreeGrafter"/>
</dbReference>
<dbReference type="GO" id="GO:0006094">
    <property type="term" value="P:gluconeogenesis"/>
    <property type="evidence" value="ECO:0007669"/>
    <property type="project" value="UniProtKB-UniRule"/>
</dbReference>
<dbReference type="GO" id="GO:0051156">
    <property type="term" value="P:glucose 6-phosphate metabolic process"/>
    <property type="evidence" value="ECO:0007669"/>
    <property type="project" value="TreeGrafter"/>
</dbReference>
<dbReference type="GO" id="GO:0006096">
    <property type="term" value="P:glycolytic process"/>
    <property type="evidence" value="ECO:0007669"/>
    <property type="project" value="UniProtKB-UniRule"/>
</dbReference>
<dbReference type="CDD" id="cd05015">
    <property type="entry name" value="SIS_PGI_1"/>
    <property type="match status" value="1"/>
</dbReference>
<dbReference type="CDD" id="cd05016">
    <property type="entry name" value="SIS_PGI_2"/>
    <property type="match status" value="1"/>
</dbReference>
<dbReference type="Gene3D" id="1.10.1390.10">
    <property type="match status" value="1"/>
</dbReference>
<dbReference type="Gene3D" id="3.40.50.10490">
    <property type="entry name" value="Glucose-6-phosphate isomerase like protein, domain 1"/>
    <property type="match status" value="2"/>
</dbReference>
<dbReference type="HAMAP" id="MF_00473">
    <property type="entry name" value="G6P_isomerase"/>
    <property type="match status" value="1"/>
</dbReference>
<dbReference type="InterPro" id="IPR001672">
    <property type="entry name" value="G6P_Isomerase"/>
</dbReference>
<dbReference type="InterPro" id="IPR023096">
    <property type="entry name" value="G6P_Isomerase_C"/>
</dbReference>
<dbReference type="InterPro" id="IPR018189">
    <property type="entry name" value="Phosphoglucose_isomerase_CS"/>
</dbReference>
<dbReference type="InterPro" id="IPR046348">
    <property type="entry name" value="SIS_dom_sf"/>
</dbReference>
<dbReference type="InterPro" id="IPR035476">
    <property type="entry name" value="SIS_PGI_1"/>
</dbReference>
<dbReference type="InterPro" id="IPR035482">
    <property type="entry name" value="SIS_PGI_2"/>
</dbReference>
<dbReference type="NCBIfam" id="NF010695">
    <property type="entry name" value="PRK14095.1"/>
    <property type="match status" value="1"/>
</dbReference>
<dbReference type="PANTHER" id="PTHR11469">
    <property type="entry name" value="GLUCOSE-6-PHOSPHATE ISOMERASE"/>
    <property type="match status" value="1"/>
</dbReference>
<dbReference type="PANTHER" id="PTHR11469:SF1">
    <property type="entry name" value="GLUCOSE-6-PHOSPHATE ISOMERASE"/>
    <property type="match status" value="1"/>
</dbReference>
<dbReference type="Pfam" id="PF00342">
    <property type="entry name" value="PGI"/>
    <property type="match status" value="1"/>
</dbReference>
<dbReference type="PRINTS" id="PR00662">
    <property type="entry name" value="G6PISOMERASE"/>
</dbReference>
<dbReference type="SUPFAM" id="SSF53697">
    <property type="entry name" value="SIS domain"/>
    <property type="match status" value="1"/>
</dbReference>
<dbReference type="PROSITE" id="PS00765">
    <property type="entry name" value="P_GLUCOSE_ISOMERASE_1"/>
    <property type="match status" value="1"/>
</dbReference>
<dbReference type="PROSITE" id="PS00174">
    <property type="entry name" value="P_GLUCOSE_ISOMERASE_2"/>
    <property type="match status" value="1"/>
</dbReference>
<dbReference type="PROSITE" id="PS51463">
    <property type="entry name" value="P_GLUCOSE_ISOMERASE_3"/>
    <property type="match status" value="1"/>
</dbReference>
<gene>
    <name evidence="1" type="primary">pgi</name>
    <name type="ordered locus">BG0752</name>
</gene>